<reference key="1">
    <citation type="journal article" date="2008" name="J. Bacteriol.">
        <title>The complete genome sequence of Escherichia coli DH10B: insights into the biology of a laboratory workhorse.</title>
        <authorList>
            <person name="Durfee T."/>
            <person name="Nelson R."/>
            <person name="Baldwin S."/>
            <person name="Plunkett G. III"/>
            <person name="Burland V."/>
            <person name="Mau B."/>
            <person name="Petrosino J.F."/>
            <person name="Qin X."/>
            <person name="Muzny D.M."/>
            <person name="Ayele M."/>
            <person name="Gibbs R.A."/>
            <person name="Csorgo B."/>
            <person name="Posfai G."/>
            <person name="Weinstock G.M."/>
            <person name="Blattner F.R."/>
        </authorList>
    </citation>
    <scope>NUCLEOTIDE SEQUENCE [LARGE SCALE GENOMIC DNA]</scope>
    <source>
        <strain>K12 / DH10B</strain>
    </source>
</reference>
<accession>B1X6L1</accession>
<organism>
    <name type="scientific">Escherichia coli (strain K12 / DH10B)</name>
    <dbReference type="NCBI Taxonomy" id="316385"/>
    <lineage>
        <taxon>Bacteria</taxon>
        <taxon>Pseudomonadati</taxon>
        <taxon>Pseudomonadota</taxon>
        <taxon>Gammaproteobacteria</taxon>
        <taxon>Enterobacterales</taxon>
        <taxon>Enterobacteriaceae</taxon>
        <taxon>Escherichia</taxon>
    </lineage>
</organism>
<dbReference type="EC" id="3.5.99.6" evidence="1"/>
<dbReference type="EMBL" id="CP000948">
    <property type="protein sequence ID" value="ACB01889.1"/>
    <property type="molecule type" value="Genomic_DNA"/>
</dbReference>
<dbReference type="RefSeq" id="WP_001237072.1">
    <property type="nucleotide sequence ID" value="NC_010473.1"/>
</dbReference>
<dbReference type="SMR" id="B1X6L1"/>
<dbReference type="GeneID" id="93776807"/>
<dbReference type="KEGG" id="ecd:ECDH10B_0743"/>
<dbReference type="HOGENOM" id="CLU_049611_0_1_6"/>
<dbReference type="UniPathway" id="UPA00629">
    <property type="reaction ID" value="UER00684"/>
</dbReference>
<dbReference type="GO" id="GO:0005829">
    <property type="term" value="C:cytosol"/>
    <property type="evidence" value="ECO:0007669"/>
    <property type="project" value="TreeGrafter"/>
</dbReference>
<dbReference type="GO" id="GO:0004342">
    <property type="term" value="F:glucosamine-6-phosphate deaminase activity"/>
    <property type="evidence" value="ECO:0007669"/>
    <property type="project" value="UniProtKB-UniRule"/>
</dbReference>
<dbReference type="GO" id="GO:0042802">
    <property type="term" value="F:identical protein binding"/>
    <property type="evidence" value="ECO:0007669"/>
    <property type="project" value="TreeGrafter"/>
</dbReference>
<dbReference type="GO" id="GO:0005975">
    <property type="term" value="P:carbohydrate metabolic process"/>
    <property type="evidence" value="ECO:0007669"/>
    <property type="project" value="InterPro"/>
</dbReference>
<dbReference type="GO" id="GO:0006043">
    <property type="term" value="P:glucosamine catabolic process"/>
    <property type="evidence" value="ECO:0007669"/>
    <property type="project" value="TreeGrafter"/>
</dbReference>
<dbReference type="GO" id="GO:0006046">
    <property type="term" value="P:N-acetylglucosamine catabolic process"/>
    <property type="evidence" value="ECO:0007669"/>
    <property type="project" value="TreeGrafter"/>
</dbReference>
<dbReference type="GO" id="GO:0019262">
    <property type="term" value="P:N-acetylneuraminate catabolic process"/>
    <property type="evidence" value="ECO:0007669"/>
    <property type="project" value="UniProtKB-UniRule"/>
</dbReference>
<dbReference type="CDD" id="cd01399">
    <property type="entry name" value="GlcN6P_deaminase"/>
    <property type="match status" value="1"/>
</dbReference>
<dbReference type="FunFam" id="3.40.50.1360:FF:000002">
    <property type="entry name" value="Glucosamine-6-phosphate deaminase"/>
    <property type="match status" value="1"/>
</dbReference>
<dbReference type="Gene3D" id="3.40.50.1360">
    <property type="match status" value="1"/>
</dbReference>
<dbReference type="HAMAP" id="MF_01241">
    <property type="entry name" value="GlcN6P_deamin"/>
    <property type="match status" value="1"/>
</dbReference>
<dbReference type="InterPro" id="IPR006148">
    <property type="entry name" value="Glc/Gal-6P_isomerase"/>
</dbReference>
<dbReference type="InterPro" id="IPR004547">
    <property type="entry name" value="Glucosamine6P_isomerase"/>
</dbReference>
<dbReference type="InterPro" id="IPR018321">
    <property type="entry name" value="Glucosamine6P_isomerase_CS"/>
</dbReference>
<dbReference type="InterPro" id="IPR037171">
    <property type="entry name" value="NagB/RpiA_transferase-like"/>
</dbReference>
<dbReference type="NCBIfam" id="TIGR00502">
    <property type="entry name" value="nagB"/>
    <property type="match status" value="1"/>
</dbReference>
<dbReference type="NCBIfam" id="NF001685">
    <property type="entry name" value="PRK00443.1-5"/>
    <property type="match status" value="1"/>
</dbReference>
<dbReference type="PANTHER" id="PTHR11280">
    <property type="entry name" value="GLUCOSAMINE-6-PHOSPHATE ISOMERASE"/>
    <property type="match status" value="1"/>
</dbReference>
<dbReference type="PANTHER" id="PTHR11280:SF5">
    <property type="entry name" value="GLUCOSAMINE-6-PHOSPHATE ISOMERASE"/>
    <property type="match status" value="1"/>
</dbReference>
<dbReference type="Pfam" id="PF01182">
    <property type="entry name" value="Glucosamine_iso"/>
    <property type="match status" value="1"/>
</dbReference>
<dbReference type="SUPFAM" id="SSF100950">
    <property type="entry name" value="NagB/RpiA/CoA transferase-like"/>
    <property type="match status" value="1"/>
</dbReference>
<dbReference type="PROSITE" id="PS01161">
    <property type="entry name" value="GLC_GALNAC_ISOMERASE"/>
    <property type="match status" value="1"/>
</dbReference>
<comment type="function">
    <text evidence="1">Catalyzes the reversible isomerization-deamination of glucosamine 6-phosphate (GlcN6P) to form fructose 6-phosphate (Fru6P) and ammonium ion.</text>
</comment>
<comment type="catalytic activity">
    <reaction evidence="1">
        <text>alpha-D-glucosamine 6-phosphate + H2O = beta-D-fructose 6-phosphate + NH4(+)</text>
        <dbReference type="Rhea" id="RHEA:12172"/>
        <dbReference type="ChEBI" id="CHEBI:15377"/>
        <dbReference type="ChEBI" id="CHEBI:28938"/>
        <dbReference type="ChEBI" id="CHEBI:57634"/>
        <dbReference type="ChEBI" id="CHEBI:75989"/>
        <dbReference type="EC" id="3.5.99.6"/>
    </reaction>
</comment>
<comment type="activity regulation">
    <text evidence="1">Allosterically activated by N-acetylglucosamine 6-phosphate (GlcNAc6P).</text>
</comment>
<comment type="pathway">
    <text evidence="1">Amino-sugar metabolism; N-acetylneuraminate degradation; D-fructose 6-phosphate from N-acetylneuraminate: step 5/5.</text>
</comment>
<comment type="subunit">
    <text evidence="1">Homohexamer; trimer of disulfide-linked dimers.</text>
</comment>
<comment type="similarity">
    <text evidence="1">Belongs to the glucosamine/galactosamine-6-phosphate isomerase family. NagB subfamily.</text>
</comment>
<protein>
    <recommendedName>
        <fullName evidence="1">Glucosamine-6-phosphate deaminase</fullName>
        <ecNumber evidence="1">3.5.99.6</ecNumber>
    </recommendedName>
    <alternativeName>
        <fullName evidence="1">GlcN6P deaminase</fullName>
        <shortName evidence="1">GNPDA</shortName>
    </alternativeName>
    <alternativeName>
        <fullName evidence="1">Glucosamine-6-phosphate isomerase</fullName>
    </alternativeName>
</protein>
<feature type="chain" id="PRO_1000139772" description="Glucosamine-6-phosphate deaminase">
    <location>
        <begin position="1"/>
        <end position="266"/>
    </location>
</feature>
<feature type="active site" description="Proton acceptor; for enolization step" evidence="1">
    <location>
        <position position="72"/>
    </location>
</feature>
<feature type="active site" description="For ring-opening step" evidence="1">
    <location>
        <position position="141"/>
    </location>
</feature>
<feature type="active site" description="Proton acceptor; for ring-opening step" evidence="1">
    <location>
        <position position="143"/>
    </location>
</feature>
<feature type="active site" description="For ring-opening step" evidence="1">
    <location>
        <position position="148"/>
    </location>
</feature>
<feature type="site" description="Part of the allosteric site" evidence="1">
    <location>
        <position position="151"/>
    </location>
</feature>
<feature type="site" description="Part of the allosteric site" evidence="1">
    <location>
        <position position="158"/>
    </location>
</feature>
<feature type="site" description="Part of the allosteric site" evidence="1">
    <location>
        <position position="160"/>
    </location>
</feature>
<feature type="site" description="Part of the allosteric site" evidence="1">
    <location>
        <position position="161"/>
    </location>
</feature>
<feature type="site" description="Part of the allosteric site" evidence="1">
    <location>
        <position position="254"/>
    </location>
</feature>
<feature type="disulfide bond" description="Interchain" evidence="1">
    <location>
        <position position="219"/>
    </location>
</feature>
<name>NAGB_ECODH</name>
<keyword id="KW-0021">Allosteric enzyme</keyword>
<keyword id="KW-0119">Carbohydrate metabolism</keyword>
<keyword id="KW-1015">Disulfide bond</keyword>
<keyword id="KW-0378">Hydrolase</keyword>
<evidence type="ECO:0000255" key="1">
    <source>
        <dbReference type="HAMAP-Rule" id="MF_01241"/>
    </source>
</evidence>
<proteinExistence type="inferred from homology"/>
<sequence length="266" mass="29774">MRLIPLTTAEQVGKWAARHIVNRINAFKPTADRPFVLGLPTGGTPMTTYKALVEMHKAGQVSFKHVVTFNMDEYVGLPKEHPESYYSFMHRNFFDHVDIPAENINLLNGNAPDIDAECRQYEEKIRSYGKIHLFMGGVGNDGHIAFNEPASSLASRTRIKTLTHDTRVANSRFFDNDVNQVPKYALTVGVGTLLDAEEVMILVLGSQKALALQAAVEGCVNHMWTISCLQLHPKAIMVCDEPSTMELKVKTLRYFNELEAENIKGL</sequence>
<gene>
    <name evidence="1" type="primary">nagB</name>
    <name type="ordered locus">ECDH10B_0743</name>
</gene>